<proteinExistence type="evidence at protein level"/>
<evidence type="ECO:0000269" key="1">
    <source>
    </source>
</evidence>
<evidence type="ECO:0000303" key="2">
    <source>
    </source>
</evidence>
<evidence type="ECO:0000303" key="3">
    <source>
    </source>
</evidence>
<evidence type="ECO:0000305" key="4"/>
<evidence type="ECO:0000312" key="5">
    <source>
        <dbReference type="EMBL" id="CAA43079.1"/>
    </source>
</evidence>
<protein>
    <recommendedName>
        <fullName evidence="4">O-antigen chain rhamnosyltransferase WbaN</fullName>
        <ecNumber evidence="1">2.4.1.377</ecNumber>
    </recommendedName>
    <alternativeName>
        <fullName evidence="4">dTDP-Rha:alpha-D-Gal-diphosphoundecaprenol alpha-1,3-rhamnosyltransferase</fullName>
    </alternativeName>
</protein>
<keyword id="KW-0328">Glycosyltransferase</keyword>
<keyword id="KW-0448">Lipopolysaccharide biosynthesis</keyword>
<keyword id="KW-0808">Transferase</keyword>
<dbReference type="EC" id="2.4.1.377" evidence="1"/>
<dbReference type="EMBL" id="X60665">
    <property type="protein sequence ID" value="CAA43079.1"/>
    <property type="molecule type" value="Genomic_DNA"/>
</dbReference>
<dbReference type="SMR" id="Q54129"/>
<dbReference type="CAZy" id="GT2">
    <property type="family name" value="Glycosyltransferase Family 2"/>
</dbReference>
<dbReference type="UniPathway" id="UPA00281"/>
<dbReference type="GO" id="GO:0016757">
    <property type="term" value="F:glycosyltransferase activity"/>
    <property type="evidence" value="ECO:0007669"/>
    <property type="project" value="UniProtKB-KW"/>
</dbReference>
<dbReference type="GO" id="GO:0009243">
    <property type="term" value="P:O antigen biosynthetic process"/>
    <property type="evidence" value="ECO:0007669"/>
    <property type="project" value="UniProtKB-UniPathway"/>
</dbReference>
<dbReference type="GO" id="GO:0044010">
    <property type="term" value="P:single-species biofilm formation"/>
    <property type="evidence" value="ECO:0007669"/>
    <property type="project" value="TreeGrafter"/>
</dbReference>
<dbReference type="FunFam" id="3.90.550.10:FF:000151">
    <property type="entry name" value="O antigen biosynthesis rhamnosyltransferase"/>
    <property type="match status" value="1"/>
</dbReference>
<dbReference type="Gene3D" id="3.90.550.10">
    <property type="entry name" value="Spore Coat Polysaccharide Biosynthesis Protein SpsA, Chain A"/>
    <property type="match status" value="1"/>
</dbReference>
<dbReference type="InterPro" id="IPR001173">
    <property type="entry name" value="Glyco_trans_2-like"/>
</dbReference>
<dbReference type="InterPro" id="IPR050834">
    <property type="entry name" value="Glycosyltransf_2"/>
</dbReference>
<dbReference type="InterPro" id="IPR029044">
    <property type="entry name" value="Nucleotide-diphossugar_trans"/>
</dbReference>
<dbReference type="PANTHER" id="PTHR43685">
    <property type="entry name" value="GLYCOSYLTRANSFERASE"/>
    <property type="match status" value="1"/>
</dbReference>
<dbReference type="PANTHER" id="PTHR43685:SF13">
    <property type="entry name" value="O ANTIGEN BIOSYNTHESIS RHAMNOSYLTRANSFERASE RFBN"/>
    <property type="match status" value="1"/>
</dbReference>
<dbReference type="Pfam" id="PF00535">
    <property type="entry name" value="Glycos_transf_2"/>
    <property type="match status" value="1"/>
</dbReference>
<dbReference type="SUPFAM" id="SSF53448">
    <property type="entry name" value="Nucleotide-diphospho-sugar transferases"/>
    <property type="match status" value="1"/>
</dbReference>
<organism>
    <name type="scientific">Salmonella anatum</name>
    <dbReference type="NCBI Taxonomy" id="58712"/>
    <lineage>
        <taxon>Bacteria</taxon>
        <taxon>Pseudomonadati</taxon>
        <taxon>Pseudomonadota</taxon>
        <taxon>Gammaproteobacteria</taxon>
        <taxon>Enterobacterales</taxon>
        <taxon>Enterobacteriaceae</taxon>
        <taxon>Salmonella</taxon>
    </lineage>
</organism>
<gene>
    <name evidence="5" type="primary">wbaN</name>
    <name evidence="2" type="synonym">orf11.9</name>
    <name evidence="3" type="synonym">rfbN</name>
</gene>
<accession>Q54129</accession>
<feature type="chain" id="PRO_0000459721" description="O-antigen chain rhamnosyltransferase WbaN">
    <location>
        <begin position="1"/>
        <end position="315"/>
    </location>
</feature>
<reference key="1">
    <citation type="journal article" date="1992" name="Genetics">
        <title>Molecular analysis of a Salmonella enterica group E1 rfb gene cluster: O antigen and the genetic basis of the major polymorphism.</title>
        <authorList>
            <person name="Wang L."/>
            <person name="Romana L.K."/>
            <person name="Reeves P.R."/>
        </authorList>
    </citation>
    <scope>NUCLEOTIDE SEQUENCE [GENOMIC DNA]</scope>
    <source>
        <strain>M32 / Group E1</strain>
    </source>
</reference>
<reference key="2">
    <citation type="journal article" date="1993" name="J. Bacteriol.">
        <title>Glycosyl transferases of O-antigen biosynthesis in Salmonella enterica: identification and characterization of transferase genes of groups B, C2, and E1.</title>
        <authorList>
            <person name="Liu D."/>
            <person name="Haase A.M."/>
            <person name="Lindqvist L."/>
            <person name="Lindberg A.A."/>
            <person name="Reeves P.R."/>
        </authorList>
    </citation>
    <scope>FUNCTION</scope>
    <scope>CATALYTIC ACTIVITY</scope>
    <scope>PATHWAY</scope>
    <source>
        <strain>M32 / Group E1</strain>
    </source>
</reference>
<sequence length="315" mass="35902">MPSFTLIVPTYNAGTARWNEWFHAFQKQTNQPSQLIIIDSSSTDDTRNIASTYTNNIIVISPSEFNHGGTRNKALASAEESDFVVFLTQDAIFENKNALEEILSLFNDKNVAAVCGRQLPHHDANPLAIHARNFNYGTETLIKSKNDIKNLGIKTVFMSNSFAAYRRSVFEALGGFPEHTILAEDMFMAARMIQAGYKIAYCAEASVRHSHNYTPRQEFQRYFDTGVFHACNPWIQRDFGGAGGEGFRFVKSEIQFLLKNAPFWIPRALLTTFAKFLGYKLGKHWQSLPLSTCRYFSMYKSYWNNIQYSSSKEIK</sequence>
<name>WBAN_SALAN</name>
<comment type="function">
    <text evidence="1">Rhamnosyltransferase involved in the biosynthesis of the repeat unit of the lipopolysaccharide (LPS) O-antigen region (PubMed:7684736). Catalyzes the addition of a rhamnose to the galactosyl-undecaprenyl diphosphate intermediate (PubMed:7684736).</text>
</comment>
<comment type="catalytic activity">
    <reaction evidence="1">
        <text>alpha-D-galactosyl-di-trans,octa-cis-undecaprenyl diphosphate + dTDP-beta-L-rhamnose = alpha-L-rhamnosyl-(1-&gt;3)-alpha-D-galactosyl-1-diphospho-di-trans,octa-cis-undecaprenol + dTDP + H(+)</text>
        <dbReference type="Rhea" id="RHEA:66952"/>
        <dbReference type="ChEBI" id="CHEBI:15378"/>
        <dbReference type="ChEBI" id="CHEBI:57510"/>
        <dbReference type="ChEBI" id="CHEBI:58369"/>
        <dbReference type="ChEBI" id="CHEBI:138733"/>
        <dbReference type="ChEBI" id="CHEBI:167467"/>
        <dbReference type="EC" id="2.4.1.377"/>
    </reaction>
    <physiologicalReaction direction="left-to-right" evidence="1">
        <dbReference type="Rhea" id="RHEA:66953"/>
    </physiologicalReaction>
</comment>
<comment type="pathway">
    <text evidence="1">Bacterial outer membrane biogenesis; LPS O-antigen biosynthesis.</text>
</comment>
<comment type="similarity">
    <text evidence="4">Belongs to the glycosyltransferase 2 family.</text>
</comment>